<evidence type="ECO:0000255" key="1">
    <source>
        <dbReference type="HAMAP-Rule" id="MF_01367"/>
    </source>
</evidence>
<evidence type="ECO:0000305" key="2"/>
<protein>
    <recommendedName>
        <fullName evidence="1">Large ribosomal subunit protein uL14</fullName>
    </recommendedName>
    <alternativeName>
        <fullName evidence="2">50S ribosomal protein L14</fullName>
    </alternativeName>
</protein>
<dbReference type="EMBL" id="CP000950">
    <property type="protein sequence ID" value="ACA66606.1"/>
    <property type="molecule type" value="Genomic_DNA"/>
</dbReference>
<dbReference type="RefSeq" id="WP_002213325.1">
    <property type="nucleotide sequence ID" value="NZ_CP009792.1"/>
</dbReference>
<dbReference type="SMR" id="B1JIX1"/>
<dbReference type="GeneID" id="97454241"/>
<dbReference type="KEGG" id="ypy:YPK_0293"/>
<dbReference type="PATRIC" id="fig|502800.11.peg.900"/>
<dbReference type="GO" id="GO:0022625">
    <property type="term" value="C:cytosolic large ribosomal subunit"/>
    <property type="evidence" value="ECO:0007669"/>
    <property type="project" value="TreeGrafter"/>
</dbReference>
<dbReference type="GO" id="GO:0070180">
    <property type="term" value="F:large ribosomal subunit rRNA binding"/>
    <property type="evidence" value="ECO:0007669"/>
    <property type="project" value="TreeGrafter"/>
</dbReference>
<dbReference type="GO" id="GO:0003735">
    <property type="term" value="F:structural constituent of ribosome"/>
    <property type="evidence" value="ECO:0007669"/>
    <property type="project" value="InterPro"/>
</dbReference>
<dbReference type="GO" id="GO:0006412">
    <property type="term" value="P:translation"/>
    <property type="evidence" value="ECO:0007669"/>
    <property type="project" value="UniProtKB-UniRule"/>
</dbReference>
<dbReference type="CDD" id="cd00337">
    <property type="entry name" value="Ribosomal_uL14"/>
    <property type="match status" value="1"/>
</dbReference>
<dbReference type="FunFam" id="2.40.150.20:FF:000001">
    <property type="entry name" value="50S ribosomal protein L14"/>
    <property type="match status" value="1"/>
</dbReference>
<dbReference type="Gene3D" id="2.40.150.20">
    <property type="entry name" value="Ribosomal protein L14"/>
    <property type="match status" value="1"/>
</dbReference>
<dbReference type="HAMAP" id="MF_01367">
    <property type="entry name" value="Ribosomal_uL14"/>
    <property type="match status" value="1"/>
</dbReference>
<dbReference type="InterPro" id="IPR000218">
    <property type="entry name" value="Ribosomal_uL14"/>
</dbReference>
<dbReference type="InterPro" id="IPR005745">
    <property type="entry name" value="Ribosomal_uL14_bac-type"/>
</dbReference>
<dbReference type="InterPro" id="IPR019972">
    <property type="entry name" value="Ribosomal_uL14_CS"/>
</dbReference>
<dbReference type="InterPro" id="IPR036853">
    <property type="entry name" value="Ribosomal_uL14_sf"/>
</dbReference>
<dbReference type="NCBIfam" id="TIGR01067">
    <property type="entry name" value="rplN_bact"/>
    <property type="match status" value="1"/>
</dbReference>
<dbReference type="PANTHER" id="PTHR11761">
    <property type="entry name" value="50S/60S RIBOSOMAL PROTEIN L14/L23"/>
    <property type="match status" value="1"/>
</dbReference>
<dbReference type="PANTHER" id="PTHR11761:SF3">
    <property type="entry name" value="LARGE RIBOSOMAL SUBUNIT PROTEIN UL14M"/>
    <property type="match status" value="1"/>
</dbReference>
<dbReference type="Pfam" id="PF00238">
    <property type="entry name" value="Ribosomal_L14"/>
    <property type="match status" value="1"/>
</dbReference>
<dbReference type="SMART" id="SM01374">
    <property type="entry name" value="Ribosomal_L14"/>
    <property type="match status" value="1"/>
</dbReference>
<dbReference type="SUPFAM" id="SSF50193">
    <property type="entry name" value="Ribosomal protein L14"/>
    <property type="match status" value="1"/>
</dbReference>
<dbReference type="PROSITE" id="PS00049">
    <property type="entry name" value="RIBOSOMAL_L14"/>
    <property type="match status" value="1"/>
</dbReference>
<organism>
    <name type="scientific">Yersinia pseudotuberculosis serotype O:3 (strain YPIII)</name>
    <dbReference type="NCBI Taxonomy" id="502800"/>
    <lineage>
        <taxon>Bacteria</taxon>
        <taxon>Pseudomonadati</taxon>
        <taxon>Pseudomonadota</taxon>
        <taxon>Gammaproteobacteria</taxon>
        <taxon>Enterobacterales</taxon>
        <taxon>Yersiniaceae</taxon>
        <taxon>Yersinia</taxon>
    </lineage>
</organism>
<sequence>MIQEQTMLNVADNSGARRVMCIKVLGGSHRRYAGIGDIIKITIKEAIPRGKVKKGDVLKAVVVRTKKGVRRPDGSVIRFDGNACVILNNNSEQPIGTRIFGPVTRELRNEKFMKIISLAPEVL</sequence>
<reference key="1">
    <citation type="submission" date="2008-02" db="EMBL/GenBank/DDBJ databases">
        <title>Complete sequence of Yersinia pseudotuberculosis YPIII.</title>
        <authorList>
            <consortium name="US DOE Joint Genome Institute"/>
            <person name="Copeland A."/>
            <person name="Lucas S."/>
            <person name="Lapidus A."/>
            <person name="Glavina del Rio T."/>
            <person name="Dalin E."/>
            <person name="Tice H."/>
            <person name="Bruce D."/>
            <person name="Goodwin L."/>
            <person name="Pitluck S."/>
            <person name="Munk A.C."/>
            <person name="Brettin T."/>
            <person name="Detter J.C."/>
            <person name="Han C."/>
            <person name="Tapia R."/>
            <person name="Schmutz J."/>
            <person name="Larimer F."/>
            <person name="Land M."/>
            <person name="Hauser L."/>
            <person name="Challacombe J.F."/>
            <person name="Green L."/>
            <person name="Lindler L.E."/>
            <person name="Nikolich M.P."/>
            <person name="Richardson P."/>
        </authorList>
    </citation>
    <scope>NUCLEOTIDE SEQUENCE [LARGE SCALE GENOMIC DNA]</scope>
    <source>
        <strain>YPIII</strain>
    </source>
</reference>
<proteinExistence type="inferred from homology"/>
<gene>
    <name evidence="1" type="primary">rplN</name>
    <name type="ordered locus">YPK_0293</name>
</gene>
<keyword id="KW-0687">Ribonucleoprotein</keyword>
<keyword id="KW-0689">Ribosomal protein</keyword>
<keyword id="KW-0694">RNA-binding</keyword>
<keyword id="KW-0699">rRNA-binding</keyword>
<name>RL14_YERPY</name>
<accession>B1JIX1</accession>
<comment type="function">
    <text evidence="1">Binds to 23S rRNA. Forms part of two intersubunit bridges in the 70S ribosome.</text>
</comment>
<comment type="subunit">
    <text evidence="1">Part of the 50S ribosomal subunit. Forms a cluster with proteins L3 and L19. In the 70S ribosome, L14 and L19 interact and together make contacts with the 16S rRNA in bridges B5 and B8.</text>
</comment>
<comment type="similarity">
    <text evidence="1">Belongs to the universal ribosomal protein uL14 family.</text>
</comment>
<feature type="chain" id="PRO_1000144356" description="Large ribosomal subunit protein uL14">
    <location>
        <begin position="1"/>
        <end position="123"/>
    </location>
</feature>